<organism>
    <name type="scientific">Caulobacter vibrioides (strain NA1000 / CB15N)</name>
    <name type="common">Caulobacter crescentus</name>
    <dbReference type="NCBI Taxonomy" id="565050"/>
    <lineage>
        <taxon>Bacteria</taxon>
        <taxon>Pseudomonadati</taxon>
        <taxon>Pseudomonadota</taxon>
        <taxon>Alphaproteobacteria</taxon>
        <taxon>Caulobacterales</taxon>
        <taxon>Caulobacteraceae</taxon>
        <taxon>Caulobacter</taxon>
    </lineage>
</organism>
<proteinExistence type="inferred from homology"/>
<name>YIDD_CAUVN</name>
<dbReference type="EMBL" id="CP001340">
    <property type="protein sequence ID" value="ACL93960.1"/>
    <property type="molecule type" value="Genomic_DNA"/>
</dbReference>
<dbReference type="RefSeq" id="YP_002515868.1">
    <property type="nucleotide sequence ID" value="NC_011916.1"/>
</dbReference>
<dbReference type="GeneID" id="7332185"/>
<dbReference type="KEGG" id="ccs:CCNA_00495"/>
<dbReference type="PATRIC" id="fig|565050.3.peg.486"/>
<dbReference type="HOGENOM" id="CLU_144811_6_1_5"/>
<dbReference type="OrthoDB" id="9801753at2"/>
<dbReference type="PhylomeDB" id="B8GZS6"/>
<dbReference type="Proteomes" id="UP000001364">
    <property type="component" value="Chromosome"/>
</dbReference>
<dbReference type="GO" id="GO:0005886">
    <property type="term" value="C:plasma membrane"/>
    <property type="evidence" value="ECO:0007669"/>
    <property type="project" value="UniProtKB-SubCell"/>
</dbReference>
<dbReference type="HAMAP" id="MF_00386">
    <property type="entry name" value="UPF0161_YidD"/>
    <property type="match status" value="1"/>
</dbReference>
<dbReference type="InterPro" id="IPR002696">
    <property type="entry name" value="Membr_insert_effic_factor_YidD"/>
</dbReference>
<dbReference type="NCBIfam" id="TIGR00278">
    <property type="entry name" value="membrane protein insertion efficiency factor YidD"/>
    <property type="match status" value="1"/>
</dbReference>
<dbReference type="PANTHER" id="PTHR33383">
    <property type="entry name" value="MEMBRANE PROTEIN INSERTION EFFICIENCY FACTOR-RELATED"/>
    <property type="match status" value="1"/>
</dbReference>
<dbReference type="PANTHER" id="PTHR33383:SF1">
    <property type="entry name" value="MEMBRANE PROTEIN INSERTION EFFICIENCY FACTOR-RELATED"/>
    <property type="match status" value="1"/>
</dbReference>
<dbReference type="Pfam" id="PF01809">
    <property type="entry name" value="YidD"/>
    <property type="match status" value="1"/>
</dbReference>
<dbReference type="SMART" id="SM01234">
    <property type="entry name" value="Haemolytic"/>
    <property type="match status" value="1"/>
</dbReference>
<sequence length="84" mass="9584">MTFYERTVDLGLRAYKLTLSPLIGRQCRFTPSCSEYTAAALKDHGPLKGSWLGLRRICRCNPFGGSGYDPPPPRHQPRKWKCEE</sequence>
<keyword id="KW-0997">Cell inner membrane</keyword>
<keyword id="KW-1003">Cell membrane</keyword>
<keyword id="KW-0472">Membrane</keyword>
<keyword id="KW-1185">Reference proteome</keyword>
<evidence type="ECO:0000255" key="1">
    <source>
        <dbReference type="HAMAP-Rule" id="MF_00386"/>
    </source>
</evidence>
<evidence type="ECO:0000256" key="2">
    <source>
        <dbReference type="SAM" id="MobiDB-lite"/>
    </source>
</evidence>
<feature type="chain" id="PRO_1000197743" description="Putative membrane protein insertion efficiency factor">
    <location>
        <begin position="1"/>
        <end position="84"/>
    </location>
</feature>
<feature type="region of interest" description="Disordered" evidence="2">
    <location>
        <begin position="64"/>
        <end position="84"/>
    </location>
</feature>
<feature type="compositionally biased region" description="Basic residues" evidence="2">
    <location>
        <begin position="75"/>
        <end position="84"/>
    </location>
</feature>
<reference key="1">
    <citation type="journal article" date="2010" name="J. Bacteriol.">
        <title>The genetic basis of laboratory adaptation in Caulobacter crescentus.</title>
        <authorList>
            <person name="Marks M.E."/>
            <person name="Castro-Rojas C.M."/>
            <person name="Teiling C."/>
            <person name="Du L."/>
            <person name="Kapatral V."/>
            <person name="Walunas T.L."/>
            <person name="Crosson S."/>
        </authorList>
    </citation>
    <scope>NUCLEOTIDE SEQUENCE [LARGE SCALE GENOMIC DNA]</scope>
    <source>
        <strain>NA1000 / CB15N</strain>
    </source>
</reference>
<accession>B8GZS6</accession>
<gene>
    <name type="ordered locus">CCNA_00495</name>
</gene>
<comment type="function">
    <text evidence="1">Could be involved in insertion of integral membrane proteins into the membrane.</text>
</comment>
<comment type="subcellular location">
    <subcellularLocation>
        <location evidence="1">Cell inner membrane</location>
        <topology evidence="1">Peripheral membrane protein</topology>
        <orientation evidence="1">Cytoplasmic side</orientation>
    </subcellularLocation>
</comment>
<comment type="similarity">
    <text evidence="1">Belongs to the UPF0161 family.</text>
</comment>
<protein>
    <recommendedName>
        <fullName evidence="1">Putative membrane protein insertion efficiency factor</fullName>
    </recommendedName>
</protein>